<comment type="function">
    <text evidence="2">Involved in cellular auxin homeostasis by regulating auxin metabolism. Regulates intracellular auxin accumulation at the endoplasmic reticulum and thus auxin availability for nuclear auxin signaling.</text>
</comment>
<comment type="subcellular location">
    <subcellularLocation>
        <location evidence="2">Endoplasmic reticulum membrane</location>
        <topology evidence="4">Multi-pass membrane protein</topology>
    </subcellularLocation>
</comment>
<comment type="tissue specificity">
    <text evidence="2">Expressed in seedlings, cauline leaves and flowers.</text>
</comment>
<comment type="induction">
    <text evidence="2">Up-regulated by auxin application.</text>
</comment>
<comment type="disruption phenotype">
    <text evidence="2">Increased root growth and lateral root initiation.</text>
</comment>
<comment type="similarity">
    <text evidence="4">Belongs to the auxin efflux carrier (TC 2.A.69.2) family.</text>
</comment>
<accession>Q9SHL8</accession>
<accession>B9DG37</accession>
<accession>Q8LGC5</accession>
<feature type="chain" id="PRO_0000436500" description="Protein PIN-LIKES 5">
    <location>
        <begin position="1"/>
        <end position="396"/>
    </location>
</feature>
<feature type="topological domain" description="Lumenal" evidence="5">
    <location>
        <begin position="1"/>
        <end position="5"/>
    </location>
</feature>
<feature type="transmembrane region" description="Helical" evidence="1">
    <location>
        <begin position="6"/>
        <end position="26"/>
    </location>
</feature>
<feature type="topological domain" description="Cytoplasmic" evidence="5">
    <location>
        <begin position="27"/>
        <end position="45"/>
    </location>
</feature>
<feature type="transmembrane region" description="Helical" evidence="1">
    <location>
        <begin position="46"/>
        <end position="66"/>
    </location>
</feature>
<feature type="topological domain" description="Lumenal" evidence="5">
    <location>
        <begin position="67"/>
        <end position="73"/>
    </location>
</feature>
<feature type="transmembrane region" description="Helical" evidence="1">
    <location>
        <begin position="74"/>
        <end position="94"/>
    </location>
</feature>
<feature type="topological domain" description="Cytoplasmic" evidence="5">
    <location>
        <begin position="95"/>
        <end position="106"/>
    </location>
</feature>
<feature type="transmembrane region" description="Helical" evidence="1">
    <location>
        <begin position="107"/>
        <end position="127"/>
    </location>
</feature>
<feature type="topological domain" description="Lumenal" evidence="5">
    <location>
        <begin position="128"/>
        <end position="144"/>
    </location>
</feature>
<feature type="transmembrane region" description="Helical" evidence="1">
    <location>
        <begin position="145"/>
        <end position="165"/>
    </location>
</feature>
<feature type="topological domain" description="Cytoplasmic" evidence="5">
    <location>
        <begin position="166"/>
        <end position="229"/>
    </location>
</feature>
<feature type="transmembrane region" description="Helical" evidence="1">
    <location>
        <begin position="230"/>
        <end position="250"/>
    </location>
</feature>
<feature type="topological domain" description="Lumenal" evidence="5">
    <location>
        <begin position="251"/>
        <end position="273"/>
    </location>
</feature>
<feature type="transmembrane region" description="Helical" evidence="1">
    <location>
        <begin position="274"/>
        <end position="294"/>
    </location>
</feature>
<feature type="topological domain" description="Cytoplasmic" evidence="5">
    <location>
        <begin position="295"/>
        <end position="312"/>
    </location>
</feature>
<feature type="transmembrane region" description="Helical" evidence="1">
    <location>
        <begin position="313"/>
        <end position="333"/>
    </location>
</feature>
<feature type="topological domain" description="Lumenal" evidence="5">
    <location>
        <begin position="334"/>
        <end position="337"/>
    </location>
</feature>
<feature type="transmembrane region" description="Helical" evidence="1">
    <location>
        <begin position="338"/>
        <end position="358"/>
    </location>
</feature>
<feature type="topological domain" description="Cytoplasmic" evidence="5">
    <location>
        <begin position="359"/>
        <end position="370"/>
    </location>
</feature>
<feature type="transmembrane region" description="Helical" evidence="1">
    <location>
        <begin position="371"/>
        <end position="391"/>
    </location>
</feature>
<feature type="topological domain" description="Lumenal" evidence="5">
    <location>
        <begin position="392"/>
        <end position="396"/>
    </location>
</feature>
<feature type="sequence conflict" description="In Ref. 4; AAM60930." evidence="4" ref="4">
    <original>K</original>
    <variation>E</variation>
    <location>
        <position position="216"/>
    </location>
</feature>
<feature type="sequence conflict" description="In Ref. 4; AAM60930." evidence="4" ref="4">
    <original>V</original>
    <variation>A</variation>
    <location>
        <position position="311"/>
    </location>
</feature>
<name>PILS5_ARATH</name>
<organism>
    <name type="scientific">Arabidopsis thaliana</name>
    <name type="common">Mouse-ear cress</name>
    <dbReference type="NCBI Taxonomy" id="3702"/>
    <lineage>
        <taxon>Eukaryota</taxon>
        <taxon>Viridiplantae</taxon>
        <taxon>Streptophyta</taxon>
        <taxon>Embryophyta</taxon>
        <taxon>Tracheophyta</taxon>
        <taxon>Spermatophyta</taxon>
        <taxon>Magnoliopsida</taxon>
        <taxon>eudicotyledons</taxon>
        <taxon>Gunneridae</taxon>
        <taxon>Pentapetalae</taxon>
        <taxon>rosids</taxon>
        <taxon>malvids</taxon>
        <taxon>Brassicales</taxon>
        <taxon>Brassicaceae</taxon>
        <taxon>Camelineae</taxon>
        <taxon>Arabidopsis</taxon>
    </lineage>
</organism>
<gene>
    <name evidence="3" type="primary">PILS5</name>
    <name evidence="6" type="ordered locus">At2g17500</name>
    <name evidence="7" type="ORF">MJB20.6</name>
</gene>
<reference key="1">
    <citation type="journal article" date="1999" name="Nature">
        <title>Sequence and analysis of chromosome 2 of the plant Arabidopsis thaliana.</title>
        <authorList>
            <person name="Lin X."/>
            <person name="Kaul S."/>
            <person name="Rounsley S.D."/>
            <person name="Shea T.P."/>
            <person name="Benito M.-I."/>
            <person name="Town C.D."/>
            <person name="Fujii C.Y."/>
            <person name="Mason T.M."/>
            <person name="Bowman C.L."/>
            <person name="Barnstead M.E."/>
            <person name="Feldblyum T.V."/>
            <person name="Buell C.R."/>
            <person name="Ketchum K.A."/>
            <person name="Lee J.J."/>
            <person name="Ronning C.M."/>
            <person name="Koo H.L."/>
            <person name="Moffat K.S."/>
            <person name="Cronin L.A."/>
            <person name="Shen M."/>
            <person name="Pai G."/>
            <person name="Van Aken S."/>
            <person name="Umayam L."/>
            <person name="Tallon L.J."/>
            <person name="Gill J.E."/>
            <person name="Adams M.D."/>
            <person name="Carrera A.J."/>
            <person name="Creasy T.H."/>
            <person name="Goodman H.M."/>
            <person name="Somerville C.R."/>
            <person name="Copenhaver G.P."/>
            <person name="Preuss D."/>
            <person name="Nierman W.C."/>
            <person name="White O."/>
            <person name="Eisen J.A."/>
            <person name="Salzberg S.L."/>
            <person name="Fraser C.M."/>
            <person name="Venter J.C."/>
        </authorList>
    </citation>
    <scope>NUCLEOTIDE SEQUENCE [LARGE SCALE GENOMIC DNA]</scope>
    <source>
        <strain>cv. Columbia</strain>
    </source>
</reference>
<reference key="2">
    <citation type="journal article" date="2017" name="Plant J.">
        <title>Araport11: a complete reannotation of the Arabidopsis thaliana reference genome.</title>
        <authorList>
            <person name="Cheng C.Y."/>
            <person name="Krishnakumar V."/>
            <person name="Chan A.P."/>
            <person name="Thibaud-Nissen F."/>
            <person name="Schobel S."/>
            <person name="Town C.D."/>
        </authorList>
    </citation>
    <scope>GENOME REANNOTATION</scope>
    <source>
        <strain>cv. Columbia</strain>
    </source>
</reference>
<reference key="3">
    <citation type="submission" date="2006-07" db="EMBL/GenBank/DDBJ databases">
        <title>Large-scale analysis of RIKEN Arabidopsis full-length (RAFL) cDNAs.</title>
        <authorList>
            <person name="Totoki Y."/>
            <person name="Seki M."/>
            <person name="Ishida J."/>
            <person name="Nakajima M."/>
            <person name="Enju A."/>
            <person name="Kamiya A."/>
            <person name="Narusaka M."/>
            <person name="Shin-i T."/>
            <person name="Nakagawa M."/>
            <person name="Sakamoto N."/>
            <person name="Oishi K."/>
            <person name="Kohara Y."/>
            <person name="Kobayashi M."/>
            <person name="Toyoda A."/>
            <person name="Sakaki Y."/>
            <person name="Sakurai T."/>
            <person name="Iida K."/>
            <person name="Akiyama K."/>
            <person name="Satou M."/>
            <person name="Toyoda T."/>
            <person name="Konagaya A."/>
            <person name="Carninci P."/>
            <person name="Kawai J."/>
            <person name="Hayashizaki Y."/>
            <person name="Shinozaki K."/>
        </authorList>
    </citation>
    <scope>NUCLEOTIDE SEQUENCE [LARGE SCALE MRNA]</scope>
    <source>
        <strain>cv. Columbia</strain>
    </source>
</reference>
<reference key="4">
    <citation type="submission" date="2002-03" db="EMBL/GenBank/DDBJ databases">
        <title>Full-length cDNA from Arabidopsis thaliana.</title>
        <authorList>
            <person name="Brover V.V."/>
            <person name="Troukhan M.E."/>
            <person name="Alexandrov N.A."/>
            <person name="Lu Y.-P."/>
            <person name="Flavell R.B."/>
            <person name="Feldmann K.A."/>
        </authorList>
    </citation>
    <scope>NUCLEOTIDE SEQUENCE [LARGE SCALE MRNA]</scope>
</reference>
<reference key="5">
    <citation type="journal article" date="2009" name="DNA Res.">
        <title>Analysis of multiple occurrences of alternative splicing events in Arabidopsis thaliana using novel sequenced full-length cDNAs.</title>
        <authorList>
            <person name="Iida K."/>
            <person name="Fukami-Kobayashi K."/>
            <person name="Toyoda A."/>
            <person name="Sakaki Y."/>
            <person name="Kobayashi M."/>
            <person name="Seki M."/>
            <person name="Shinozaki K."/>
        </authorList>
    </citation>
    <scope>NUCLEOTIDE SEQUENCE [LARGE SCALE MRNA] OF 1-210</scope>
    <source>
        <strain>cv. Columbia</strain>
    </source>
</reference>
<reference key="6">
    <citation type="journal article" date="2012" name="Nature">
        <title>A novel putative auxin carrier family regulates intracellular auxin homeostasis in plants.</title>
        <authorList>
            <person name="Barbez E."/>
            <person name="Kubes M."/>
            <person name="Rolcik J."/>
            <person name="Beziat C."/>
            <person name="Pencik A."/>
            <person name="Wang B."/>
            <person name="Rosquete M.R."/>
            <person name="Zhu J."/>
            <person name="Dobrev P.I."/>
            <person name="Lee Y."/>
            <person name="Zazimalova E."/>
            <person name="Petrasek J."/>
            <person name="Geisler M."/>
            <person name="Friml J."/>
            <person name="Kleine-Vehn J."/>
        </authorList>
    </citation>
    <scope>FUNCTION</scope>
    <scope>TISSUE SPECIFICITY</scope>
    <scope>INDUCTION BY AUXIN</scope>
    <scope>GENE FAMILY</scope>
    <scope>NOMENCLATURE</scope>
    <scope>DISRUPTION PHENOTYPE</scope>
    <scope>SUBCELLULAR LOCATION</scope>
</reference>
<reference key="7">
    <citation type="journal article" date="2012" name="Front. Plant Sci.">
        <title>Evolution and structural diversification of PILS putative auxin carriers in plants.</title>
        <authorList>
            <person name="Feraru E."/>
            <person name="Vosolsobe S."/>
            <person name="Feraru M.I."/>
            <person name="Petrasek J."/>
            <person name="Kleine-Vehn J."/>
        </authorList>
    </citation>
    <scope>GENE FAMILY</scope>
    <scope>NOMENCLATURE</scope>
</reference>
<sequence length="396" mass="43394">MGFWSLLEVASMPVIQVLFMSLVGAFMASDRCKLFPVEARNSMNKVVFVLFAPALMFANLAQTVTLEDIISWWFMPVNMGLTFLIGGLLGWLVVKILKPPPYLEGLIVATCSAGNMGNLPIILVPAICDEDKSPFGNRSVCRTVGLSYASFSMALGGFYIWTYTFRLIKGSAMKVQAIEESEKIAIKSSNSDLEADHKTHLLGAPEDKENKVVKEKTGFWRKGVDFLHEILEELLAPPTLGAIIGFIFGAVRWLRNLIIGDDAPLRIVQSTAKLLGDGTIPCMTIILGGNLIQGLRSSAVKPMVVLGIVCVRYIAMPIIGIGIVLTAANLGFLPADPLFQYVLMLQFTLPPAMNIGTMTQLYNVAQDECSVLMLWTYLVAILALTVWSTIFLHLLV</sequence>
<protein>
    <recommendedName>
        <fullName evidence="3">Protein PIN-LIKES 5</fullName>
    </recommendedName>
    <alternativeName>
        <fullName evidence="3">Auxin efflux carrier-like protein 5</fullName>
    </alternativeName>
</protein>
<evidence type="ECO:0000255" key="1"/>
<evidence type="ECO:0000269" key="2">
    <source>
    </source>
</evidence>
<evidence type="ECO:0000303" key="3">
    <source>
    </source>
</evidence>
<evidence type="ECO:0000305" key="4"/>
<evidence type="ECO:0000305" key="5">
    <source>
    </source>
</evidence>
<evidence type="ECO:0000312" key="6">
    <source>
        <dbReference type="Araport" id="AT2G17500"/>
    </source>
</evidence>
<evidence type="ECO:0000312" key="7">
    <source>
        <dbReference type="EMBL" id="AAD32907.1"/>
    </source>
</evidence>
<dbReference type="EMBL" id="AC007584">
    <property type="protein sequence ID" value="AAD32907.1"/>
    <property type="molecule type" value="Genomic_DNA"/>
</dbReference>
<dbReference type="EMBL" id="CP002685">
    <property type="protein sequence ID" value="AEC06634.1"/>
    <property type="molecule type" value="Genomic_DNA"/>
</dbReference>
<dbReference type="EMBL" id="CP002685">
    <property type="protein sequence ID" value="AEC06635.1"/>
    <property type="molecule type" value="Genomic_DNA"/>
</dbReference>
<dbReference type="EMBL" id="CP002685">
    <property type="protein sequence ID" value="AEC06636.1"/>
    <property type="molecule type" value="Genomic_DNA"/>
</dbReference>
<dbReference type="EMBL" id="CP002685">
    <property type="protein sequence ID" value="AEC06637.1"/>
    <property type="molecule type" value="Genomic_DNA"/>
</dbReference>
<dbReference type="EMBL" id="AK226321">
    <property type="protein sequence ID" value="BAE98473.1"/>
    <property type="molecule type" value="mRNA"/>
</dbReference>
<dbReference type="EMBL" id="AY084347">
    <property type="protein sequence ID" value="AAM60930.1"/>
    <property type="molecule type" value="mRNA"/>
</dbReference>
<dbReference type="EMBL" id="AK317010">
    <property type="protein sequence ID" value="BAH19704.1"/>
    <property type="molecule type" value="mRNA"/>
</dbReference>
<dbReference type="PIR" id="H84552">
    <property type="entry name" value="H84552"/>
</dbReference>
<dbReference type="RefSeq" id="NP_001031363.1">
    <property type="nucleotide sequence ID" value="NM_001036286.3"/>
</dbReference>
<dbReference type="RefSeq" id="NP_565417.1">
    <property type="nucleotide sequence ID" value="NM_127304.3"/>
</dbReference>
<dbReference type="RefSeq" id="NP_849964.1">
    <property type="nucleotide sequence ID" value="NM_179633.4"/>
</dbReference>
<dbReference type="RefSeq" id="NP_973479.1">
    <property type="nucleotide sequence ID" value="NM_201750.2"/>
</dbReference>
<dbReference type="FunCoup" id="Q9SHL8">
    <property type="interactions" value="178"/>
</dbReference>
<dbReference type="STRING" id="3702.Q9SHL8"/>
<dbReference type="PaxDb" id="3702-AT2G17500.2"/>
<dbReference type="ProteomicsDB" id="235017"/>
<dbReference type="EnsemblPlants" id="AT2G17500.1">
    <property type="protein sequence ID" value="AT2G17500.1"/>
    <property type="gene ID" value="AT2G17500"/>
</dbReference>
<dbReference type="EnsemblPlants" id="AT2G17500.2">
    <property type="protein sequence ID" value="AT2G17500.2"/>
    <property type="gene ID" value="AT2G17500"/>
</dbReference>
<dbReference type="EnsemblPlants" id="AT2G17500.3">
    <property type="protein sequence ID" value="AT2G17500.3"/>
    <property type="gene ID" value="AT2G17500"/>
</dbReference>
<dbReference type="EnsemblPlants" id="AT2G17500.4">
    <property type="protein sequence ID" value="AT2G17500.4"/>
    <property type="gene ID" value="AT2G17500"/>
</dbReference>
<dbReference type="GeneID" id="816256"/>
<dbReference type="Gramene" id="AT2G17500.1">
    <property type="protein sequence ID" value="AT2G17500.1"/>
    <property type="gene ID" value="AT2G17500"/>
</dbReference>
<dbReference type="Gramene" id="AT2G17500.2">
    <property type="protein sequence ID" value="AT2G17500.2"/>
    <property type="gene ID" value="AT2G17500"/>
</dbReference>
<dbReference type="Gramene" id="AT2G17500.3">
    <property type="protein sequence ID" value="AT2G17500.3"/>
    <property type="gene ID" value="AT2G17500"/>
</dbReference>
<dbReference type="Gramene" id="AT2G17500.4">
    <property type="protein sequence ID" value="AT2G17500.4"/>
    <property type="gene ID" value="AT2G17500"/>
</dbReference>
<dbReference type="KEGG" id="ath:AT2G17500"/>
<dbReference type="Araport" id="AT2G17500"/>
<dbReference type="TAIR" id="AT2G17500">
    <property type="gene designation" value="PILS5"/>
</dbReference>
<dbReference type="eggNOG" id="KOG2722">
    <property type="taxonomic scope" value="Eukaryota"/>
</dbReference>
<dbReference type="HOGENOM" id="CLU_044945_0_0_1"/>
<dbReference type="InParanoid" id="Q9SHL8"/>
<dbReference type="OMA" id="SKWFAMM"/>
<dbReference type="PhylomeDB" id="Q9SHL8"/>
<dbReference type="PRO" id="PR:Q9SHL8"/>
<dbReference type="Proteomes" id="UP000006548">
    <property type="component" value="Chromosome 2"/>
</dbReference>
<dbReference type="ExpressionAtlas" id="Q9SHL8">
    <property type="expression patterns" value="baseline and differential"/>
</dbReference>
<dbReference type="GO" id="GO:0005789">
    <property type="term" value="C:endoplasmic reticulum membrane"/>
    <property type="evidence" value="ECO:0000314"/>
    <property type="project" value="UniProtKB"/>
</dbReference>
<dbReference type="GO" id="GO:0010329">
    <property type="term" value="F:auxin efflux transmembrane transporter activity"/>
    <property type="evidence" value="ECO:0000315"/>
    <property type="project" value="UniProtKB"/>
</dbReference>
<dbReference type="GO" id="GO:0009734">
    <property type="term" value="P:auxin-activated signaling pathway"/>
    <property type="evidence" value="ECO:0007669"/>
    <property type="project" value="UniProtKB-KW"/>
</dbReference>
<dbReference type="GO" id="GO:0080162">
    <property type="term" value="P:endoplasmic reticulum to cytosol auxin transport"/>
    <property type="evidence" value="ECO:0007669"/>
    <property type="project" value="InterPro"/>
</dbReference>
<dbReference type="GO" id="GO:0140964">
    <property type="term" value="P:intracellular auxin homeostasis"/>
    <property type="evidence" value="ECO:0000314"/>
    <property type="project" value="UniProtKB"/>
</dbReference>
<dbReference type="GO" id="GO:0010311">
    <property type="term" value="P:lateral root formation"/>
    <property type="evidence" value="ECO:0000315"/>
    <property type="project" value="UniProtKB"/>
</dbReference>
<dbReference type="GO" id="GO:0040009">
    <property type="term" value="P:regulation of growth rate"/>
    <property type="evidence" value="ECO:0000315"/>
    <property type="project" value="UniProtKB"/>
</dbReference>
<dbReference type="GO" id="GO:0009733">
    <property type="term" value="P:response to auxin"/>
    <property type="evidence" value="ECO:0000270"/>
    <property type="project" value="UniProtKB"/>
</dbReference>
<dbReference type="InterPro" id="IPR004776">
    <property type="entry name" value="Mem_transp_PIN-like"/>
</dbReference>
<dbReference type="InterPro" id="IPR045033">
    <property type="entry name" value="PILS1/3/4/5/7"/>
</dbReference>
<dbReference type="PANTHER" id="PTHR31651">
    <property type="match status" value="1"/>
</dbReference>
<dbReference type="PANTHER" id="PTHR31651:SF15">
    <property type="entry name" value="PROTEIN PIN-LIKES 5"/>
    <property type="match status" value="1"/>
</dbReference>
<dbReference type="Pfam" id="PF03547">
    <property type="entry name" value="Mem_trans"/>
    <property type="match status" value="1"/>
</dbReference>
<keyword id="KW-0927">Auxin signaling pathway</keyword>
<keyword id="KW-0256">Endoplasmic reticulum</keyword>
<keyword id="KW-0472">Membrane</keyword>
<keyword id="KW-1185">Reference proteome</keyword>
<keyword id="KW-0812">Transmembrane</keyword>
<keyword id="KW-1133">Transmembrane helix</keyword>
<keyword id="KW-0813">Transport</keyword>
<proteinExistence type="evidence at transcript level"/>